<dbReference type="EC" id="4.1.99.22" evidence="1"/>
<dbReference type="EMBL" id="AM114193">
    <property type="protein sequence ID" value="CAJ37028.1"/>
    <property type="molecule type" value="Genomic_DNA"/>
</dbReference>
<dbReference type="SMR" id="Q0W3L5"/>
<dbReference type="STRING" id="351160.RCIX1842"/>
<dbReference type="KEGG" id="rci:RCIX1842"/>
<dbReference type="PATRIC" id="fig|351160.9.peg.1249"/>
<dbReference type="eggNOG" id="arCOG00930">
    <property type="taxonomic scope" value="Archaea"/>
</dbReference>
<dbReference type="OrthoDB" id="6925at2157"/>
<dbReference type="UniPathway" id="UPA00344"/>
<dbReference type="Proteomes" id="UP000000663">
    <property type="component" value="Chromosome"/>
</dbReference>
<dbReference type="GO" id="GO:0051539">
    <property type="term" value="F:4 iron, 4 sulfur cluster binding"/>
    <property type="evidence" value="ECO:0007669"/>
    <property type="project" value="UniProtKB-UniRule"/>
</dbReference>
<dbReference type="GO" id="GO:0061799">
    <property type="term" value="F:cyclic pyranopterin monophosphate synthase activity"/>
    <property type="evidence" value="ECO:0007669"/>
    <property type="project" value="TreeGrafter"/>
</dbReference>
<dbReference type="GO" id="GO:0061798">
    <property type="term" value="F:GTP 3',8'-cyclase activity"/>
    <property type="evidence" value="ECO:0007669"/>
    <property type="project" value="UniProtKB-UniRule"/>
</dbReference>
<dbReference type="GO" id="GO:0005525">
    <property type="term" value="F:GTP binding"/>
    <property type="evidence" value="ECO:0007669"/>
    <property type="project" value="UniProtKB-UniRule"/>
</dbReference>
<dbReference type="GO" id="GO:0046872">
    <property type="term" value="F:metal ion binding"/>
    <property type="evidence" value="ECO:0007669"/>
    <property type="project" value="UniProtKB-KW"/>
</dbReference>
<dbReference type="GO" id="GO:1904047">
    <property type="term" value="F:S-adenosyl-L-methionine binding"/>
    <property type="evidence" value="ECO:0007669"/>
    <property type="project" value="UniProtKB-UniRule"/>
</dbReference>
<dbReference type="GO" id="GO:0006777">
    <property type="term" value="P:Mo-molybdopterin cofactor biosynthetic process"/>
    <property type="evidence" value="ECO:0007669"/>
    <property type="project" value="UniProtKB-UniRule"/>
</dbReference>
<dbReference type="CDD" id="cd01335">
    <property type="entry name" value="Radical_SAM"/>
    <property type="match status" value="1"/>
</dbReference>
<dbReference type="CDD" id="cd21117">
    <property type="entry name" value="Twitch_MoaA"/>
    <property type="match status" value="1"/>
</dbReference>
<dbReference type="Gene3D" id="3.20.20.70">
    <property type="entry name" value="Aldolase class I"/>
    <property type="match status" value="1"/>
</dbReference>
<dbReference type="HAMAP" id="MF_01225_A">
    <property type="entry name" value="MoaA_A"/>
    <property type="match status" value="1"/>
</dbReference>
<dbReference type="InterPro" id="IPR013785">
    <property type="entry name" value="Aldolase_TIM"/>
</dbReference>
<dbReference type="InterPro" id="IPR006638">
    <property type="entry name" value="Elp3/MiaA/NifB-like_rSAM"/>
</dbReference>
<dbReference type="InterPro" id="IPR013485">
    <property type="entry name" value="MoaA_arc"/>
</dbReference>
<dbReference type="InterPro" id="IPR010505">
    <property type="entry name" value="MoaA_twitch"/>
</dbReference>
<dbReference type="InterPro" id="IPR050105">
    <property type="entry name" value="MoCo_biosynth_MoaA/MoaC"/>
</dbReference>
<dbReference type="InterPro" id="IPR007197">
    <property type="entry name" value="rSAM"/>
</dbReference>
<dbReference type="NCBIfam" id="TIGR02668">
    <property type="entry name" value="moaA_archaeal"/>
    <property type="match status" value="1"/>
</dbReference>
<dbReference type="NCBIfam" id="NF001199">
    <property type="entry name" value="PRK00164.2-1"/>
    <property type="match status" value="1"/>
</dbReference>
<dbReference type="PANTHER" id="PTHR22960:SF0">
    <property type="entry name" value="MOLYBDENUM COFACTOR BIOSYNTHESIS PROTEIN 1"/>
    <property type="match status" value="1"/>
</dbReference>
<dbReference type="PANTHER" id="PTHR22960">
    <property type="entry name" value="MOLYBDOPTERIN COFACTOR SYNTHESIS PROTEIN A"/>
    <property type="match status" value="1"/>
</dbReference>
<dbReference type="Pfam" id="PF13353">
    <property type="entry name" value="Fer4_12"/>
    <property type="match status" value="1"/>
</dbReference>
<dbReference type="Pfam" id="PF06463">
    <property type="entry name" value="Mob_synth_C"/>
    <property type="match status" value="1"/>
</dbReference>
<dbReference type="Pfam" id="PF04055">
    <property type="entry name" value="Radical_SAM"/>
    <property type="match status" value="1"/>
</dbReference>
<dbReference type="SFLD" id="SFLDG01383">
    <property type="entry name" value="cyclic_pyranopterin_phosphate"/>
    <property type="match status" value="1"/>
</dbReference>
<dbReference type="SFLD" id="SFLDG01072">
    <property type="entry name" value="dehydrogenase_like"/>
    <property type="match status" value="1"/>
</dbReference>
<dbReference type="SMART" id="SM00729">
    <property type="entry name" value="Elp3"/>
    <property type="match status" value="1"/>
</dbReference>
<dbReference type="SUPFAM" id="SSF102114">
    <property type="entry name" value="Radical SAM enzymes"/>
    <property type="match status" value="1"/>
</dbReference>
<dbReference type="PROSITE" id="PS51918">
    <property type="entry name" value="RADICAL_SAM"/>
    <property type="match status" value="1"/>
</dbReference>
<comment type="function">
    <text evidence="1">Catalyzes the cyclization of GTP to (8S)-3',8-cyclo-7,8-dihydroguanosine 5'-triphosphate.</text>
</comment>
<comment type="catalytic activity">
    <reaction evidence="1">
        <text>GTP + AH2 + S-adenosyl-L-methionine = (8S)-3',8-cyclo-7,8-dihydroguanosine 5'-triphosphate + 5'-deoxyadenosine + L-methionine + A + H(+)</text>
        <dbReference type="Rhea" id="RHEA:49576"/>
        <dbReference type="ChEBI" id="CHEBI:13193"/>
        <dbReference type="ChEBI" id="CHEBI:15378"/>
        <dbReference type="ChEBI" id="CHEBI:17319"/>
        <dbReference type="ChEBI" id="CHEBI:17499"/>
        <dbReference type="ChEBI" id="CHEBI:37565"/>
        <dbReference type="ChEBI" id="CHEBI:57844"/>
        <dbReference type="ChEBI" id="CHEBI:59789"/>
        <dbReference type="ChEBI" id="CHEBI:131766"/>
        <dbReference type="EC" id="4.1.99.22"/>
    </reaction>
</comment>
<comment type="cofactor">
    <cofactor evidence="1">
        <name>[4Fe-4S] cluster</name>
        <dbReference type="ChEBI" id="CHEBI:49883"/>
    </cofactor>
    <text evidence="1">Binds 2 [4Fe-4S] clusters. Binds 1 [4Fe-4S] cluster coordinated with 3 cysteines and an exchangeable S-adenosyl-L-methionine and 1 [4Fe-4S] cluster coordinated with 3 cysteines and the GTP-derived substrate.</text>
</comment>
<comment type="pathway">
    <text evidence="1">Cofactor biosynthesis; molybdopterin biosynthesis.</text>
</comment>
<comment type="similarity">
    <text evidence="1">Belongs to the radical SAM superfamily. MoaA family.</text>
</comment>
<protein>
    <recommendedName>
        <fullName evidence="1">Probable GTP 3',8-cyclase</fullName>
        <ecNumber evidence="1">4.1.99.22</ecNumber>
    </recommendedName>
    <alternativeName>
        <fullName evidence="1">Molybdenum cofactor biosynthesis protein A</fullName>
    </alternativeName>
</protein>
<sequence>MLIDAYGRRISSLRISLTNRCNLKCIYCHNEGEEDSGSEITVEEVAQIARICARYGVDKIKFSGGEPLLRRDFDEILRALPPMRDVSVTTNGTLLAARAESLKESGLDRVNVSLDSMDRDRFTFITQCKGQFDKVLDGIDAALSVGLTPVKINMVYLKGINEDEVDRMIDYVRGKPLVLQIIELMNFHGAFKYHADVASLEQRIKEKADKAVCREMHRRTKYYLGGAEVEIVRPIDNSEFCMNCNRLRITSDYKLKPCLLKNDNLVSVRGLSDAEVEAVLIKTVGAREPFFKSETAKVCQPYKIYEP</sequence>
<proteinExistence type="inferred from homology"/>
<feature type="chain" id="PRO_1000066814" description="Probable GTP 3',8-cyclase">
    <location>
        <begin position="1"/>
        <end position="307"/>
    </location>
</feature>
<feature type="domain" description="Radical SAM core" evidence="2">
    <location>
        <begin position="5"/>
        <end position="227"/>
    </location>
</feature>
<feature type="binding site" evidence="1">
    <location>
        <position position="14"/>
    </location>
    <ligand>
        <name>GTP</name>
        <dbReference type="ChEBI" id="CHEBI:37565"/>
    </ligand>
</feature>
<feature type="binding site" evidence="1">
    <location>
        <position position="21"/>
    </location>
    <ligand>
        <name>[4Fe-4S] cluster</name>
        <dbReference type="ChEBI" id="CHEBI:49883"/>
        <label>1</label>
        <note>4Fe-4S-S-AdoMet</note>
    </ligand>
</feature>
<feature type="binding site" evidence="1">
    <location>
        <position position="25"/>
    </location>
    <ligand>
        <name>[4Fe-4S] cluster</name>
        <dbReference type="ChEBI" id="CHEBI:49883"/>
        <label>1</label>
        <note>4Fe-4S-S-AdoMet</note>
    </ligand>
</feature>
<feature type="binding site" evidence="1">
    <location>
        <position position="27"/>
    </location>
    <ligand>
        <name>S-adenosyl-L-methionine</name>
        <dbReference type="ChEBI" id="CHEBI:59789"/>
    </ligand>
</feature>
<feature type="binding site" evidence="1">
    <location>
        <position position="28"/>
    </location>
    <ligand>
        <name>[4Fe-4S] cluster</name>
        <dbReference type="ChEBI" id="CHEBI:49883"/>
        <label>1</label>
        <note>4Fe-4S-S-AdoMet</note>
    </ligand>
</feature>
<feature type="binding site" evidence="1">
    <location>
        <position position="61"/>
    </location>
    <ligand>
        <name>GTP</name>
        <dbReference type="ChEBI" id="CHEBI:37565"/>
    </ligand>
</feature>
<feature type="binding site" evidence="1">
    <location>
        <position position="65"/>
    </location>
    <ligand>
        <name>S-adenosyl-L-methionine</name>
        <dbReference type="ChEBI" id="CHEBI:59789"/>
    </ligand>
</feature>
<feature type="binding site" evidence="1">
    <location>
        <position position="89"/>
    </location>
    <ligand>
        <name>GTP</name>
        <dbReference type="ChEBI" id="CHEBI:37565"/>
    </ligand>
</feature>
<feature type="binding site" evidence="1">
    <location>
        <position position="113"/>
    </location>
    <ligand>
        <name>S-adenosyl-L-methionine</name>
        <dbReference type="ChEBI" id="CHEBI:59789"/>
    </ligand>
</feature>
<feature type="binding site" evidence="1">
    <location>
        <position position="151"/>
    </location>
    <ligand>
        <name>GTP</name>
        <dbReference type="ChEBI" id="CHEBI:37565"/>
    </ligand>
</feature>
<feature type="binding site" evidence="1">
    <location>
        <position position="241"/>
    </location>
    <ligand>
        <name>[4Fe-4S] cluster</name>
        <dbReference type="ChEBI" id="CHEBI:49883"/>
        <label>2</label>
        <note>4Fe-4S-substrate</note>
    </ligand>
</feature>
<feature type="binding site" evidence="1">
    <location>
        <position position="244"/>
    </location>
    <ligand>
        <name>[4Fe-4S] cluster</name>
        <dbReference type="ChEBI" id="CHEBI:49883"/>
        <label>2</label>
        <note>4Fe-4S-substrate</note>
    </ligand>
</feature>
<feature type="binding site" evidence="1">
    <location>
        <begin position="246"/>
        <end position="248"/>
    </location>
    <ligand>
        <name>GTP</name>
        <dbReference type="ChEBI" id="CHEBI:37565"/>
    </ligand>
</feature>
<feature type="binding site" evidence="1">
    <location>
        <position position="258"/>
    </location>
    <ligand>
        <name>[4Fe-4S] cluster</name>
        <dbReference type="ChEBI" id="CHEBI:49883"/>
        <label>2</label>
        <note>4Fe-4S-substrate</note>
    </ligand>
</feature>
<organism>
    <name type="scientific">Methanocella arvoryzae (strain DSM 22066 / NBRC 105507 / MRE50)</name>
    <dbReference type="NCBI Taxonomy" id="351160"/>
    <lineage>
        <taxon>Archaea</taxon>
        <taxon>Methanobacteriati</taxon>
        <taxon>Methanobacteriota</taxon>
        <taxon>Stenosarchaea group</taxon>
        <taxon>Methanomicrobia</taxon>
        <taxon>Methanocellales</taxon>
        <taxon>Methanocellaceae</taxon>
        <taxon>Methanocella</taxon>
    </lineage>
</organism>
<accession>Q0W3L5</accession>
<keyword id="KW-0004">4Fe-4S</keyword>
<keyword id="KW-0342">GTP-binding</keyword>
<keyword id="KW-0408">Iron</keyword>
<keyword id="KW-0411">Iron-sulfur</keyword>
<keyword id="KW-0456">Lyase</keyword>
<keyword id="KW-0479">Metal-binding</keyword>
<keyword id="KW-0501">Molybdenum cofactor biosynthesis</keyword>
<keyword id="KW-0547">Nucleotide-binding</keyword>
<keyword id="KW-1185">Reference proteome</keyword>
<keyword id="KW-0949">S-adenosyl-L-methionine</keyword>
<evidence type="ECO:0000255" key="1">
    <source>
        <dbReference type="HAMAP-Rule" id="MF_01225"/>
    </source>
</evidence>
<evidence type="ECO:0000255" key="2">
    <source>
        <dbReference type="PROSITE-ProRule" id="PRU01266"/>
    </source>
</evidence>
<gene>
    <name evidence="1" type="primary">moaA</name>
    <name type="ordered locus">UNCMA_12130</name>
    <name type="ORF">RCIX1842</name>
</gene>
<reference key="1">
    <citation type="journal article" date="2006" name="Science">
        <title>Genome of rice cluster I archaea -- the key methane producers in the rice rhizosphere.</title>
        <authorList>
            <person name="Erkel C."/>
            <person name="Kube M."/>
            <person name="Reinhardt R."/>
            <person name="Liesack W."/>
        </authorList>
    </citation>
    <scope>NUCLEOTIDE SEQUENCE [LARGE SCALE GENOMIC DNA]</scope>
    <source>
        <strain>DSM 22066 / NBRC 105507 / MRE50</strain>
    </source>
</reference>
<name>MOAA_METAR</name>